<dbReference type="EC" id="3.1.13.5" evidence="1"/>
<dbReference type="EMBL" id="AE008692">
    <property type="protein sequence ID" value="AAV89338.1"/>
    <property type="molecule type" value="Genomic_DNA"/>
</dbReference>
<dbReference type="RefSeq" id="WP_011240601.1">
    <property type="nucleotide sequence ID" value="NZ_CP035711.1"/>
</dbReference>
<dbReference type="SMR" id="Q5NPM2"/>
<dbReference type="STRING" id="264203.ZMO0714"/>
<dbReference type="KEGG" id="zmo:ZMO0714"/>
<dbReference type="eggNOG" id="COG0349">
    <property type="taxonomic scope" value="Bacteria"/>
</dbReference>
<dbReference type="HOGENOM" id="CLU_042387_0_0_5"/>
<dbReference type="Proteomes" id="UP000001173">
    <property type="component" value="Chromosome"/>
</dbReference>
<dbReference type="GO" id="GO:0005737">
    <property type="term" value="C:cytoplasm"/>
    <property type="evidence" value="ECO:0007669"/>
    <property type="project" value="UniProtKB-SubCell"/>
</dbReference>
<dbReference type="GO" id="GO:0008408">
    <property type="term" value="F:3'-5' exonuclease activity"/>
    <property type="evidence" value="ECO:0007669"/>
    <property type="project" value="InterPro"/>
</dbReference>
<dbReference type="GO" id="GO:0003676">
    <property type="term" value="F:nucleic acid binding"/>
    <property type="evidence" value="ECO:0007669"/>
    <property type="project" value="InterPro"/>
</dbReference>
<dbReference type="GO" id="GO:0000166">
    <property type="term" value="F:nucleotide binding"/>
    <property type="evidence" value="ECO:0007669"/>
    <property type="project" value="InterPro"/>
</dbReference>
<dbReference type="GO" id="GO:0033890">
    <property type="term" value="F:ribonuclease D activity"/>
    <property type="evidence" value="ECO:0007669"/>
    <property type="project" value="UniProtKB-UniRule"/>
</dbReference>
<dbReference type="GO" id="GO:0042780">
    <property type="term" value="P:tRNA 3'-end processing"/>
    <property type="evidence" value="ECO:0007669"/>
    <property type="project" value="UniProtKB-UniRule"/>
</dbReference>
<dbReference type="CDD" id="cd06142">
    <property type="entry name" value="RNaseD_exo"/>
    <property type="match status" value="1"/>
</dbReference>
<dbReference type="Gene3D" id="1.10.150.80">
    <property type="entry name" value="HRDC domain"/>
    <property type="match status" value="1"/>
</dbReference>
<dbReference type="Gene3D" id="3.30.420.10">
    <property type="entry name" value="Ribonuclease H-like superfamily/Ribonuclease H"/>
    <property type="match status" value="1"/>
</dbReference>
<dbReference type="HAMAP" id="MF_01899">
    <property type="entry name" value="RNase_D"/>
    <property type="match status" value="1"/>
</dbReference>
<dbReference type="InterPro" id="IPR002562">
    <property type="entry name" value="3'-5'_exonuclease_dom"/>
</dbReference>
<dbReference type="InterPro" id="IPR010997">
    <property type="entry name" value="HRDC-like_sf"/>
</dbReference>
<dbReference type="InterPro" id="IPR002121">
    <property type="entry name" value="HRDC_dom"/>
</dbReference>
<dbReference type="InterPro" id="IPR044876">
    <property type="entry name" value="HRDC_dom_sf"/>
</dbReference>
<dbReference type="InterPro" id="IPR006292">
    <property type="entry name" value="RNase_D"/>
</dbReference>
<dbReference type="InterPro" id="IPR051086">
    <property type="entry name" value="RNase_D-like"/>
</dbReference>
<dbReference type="InterPro" id="IPR012337">
    <property type="entry name" value="RNaseH-like_sf"/>
</dbReference>
<dbReference type="InterPro" id="IPR036397">
    <property type="entry name" value="RNaseH_sf"/>
</dbReference>
<dbReference type="NCBIfam" id="TIGR01388">
    <property type="entry name" value="rnd"/>
    <property type="match status" value="1"/>
</dbReference>
<dbReference type="PANTHER" id="PTHR47649">
    <property type="entry name" value="RIBONUCLEASE D"/>
    <property type="match status" value="1"/>
</dbReference>
<dbReference type="PANTHER" id="PTHR47649:SF1">
    <property type="entry name" value="RIBONUCLEASE D"/>
    <property type="match status" value="1"/>
</dbReference>
<dbReference type="Pfam" id="PF01612">
    <property type="entry name" value="DNA_pol_A_exo1"/>
    <property type="match status" value="1"/>
</dbReference>
<dbReference type="Pfam" id="PF00570">
    <property type="entry name" value="HRDC"/>
    <property type="match status" value="1"/>
</dbReference>
<dbReference type="SMART" id="SM00474">
    <property type="entry name" value="35EXOc"/>
    <property type="match status" value="1"/>
</dbReference>
<dbReference type="SUPFAM" id="SSF47819">
    <property type="entry name" value="HRDC-like"/>
    <property type="match status" value="2"/>
</dbReference>
<dbReference type="SUPFAM" id="SSF53098">
    <property type="entry name" value="Ribonuclease H-like"/>
    <property type="match status" value="1"/>
</dbReference>
<dbReference type="PROSITE" id="PS50967">
    <property type="entry name" value="HRDC"/>
    <property type="match status" value="1"/>
</dbReference>
<keyword id="KW-0963">Cytoplasm</keyword>
<keyword id="KW-0269">Exonuclease</keyword>
<keyword id="KW-0378">Hydrolase</keyword>
<keyword id="KW-0540">Nuclease</keyword>
<keyword id="KW-1185">Reference proteome</keyword>
<keyword id="KW-0819">tRNA processing</keyword>
<organism>
    <name type="scientific">Zymomonas mobilis subsp. mobilis (strain ATCC 31821 / ZM4 / CP4)</name>
    <dbReference type="NCBI Taxonomy" id="264203"/>
    <lineage>
        <taxon>Bacteria</taxon>
        <taxon>Pseudomonadati</taxon>
        <taxon>Pseudomonadota</taxon>
        <taxon>Alphaproteobacteria</taxon>
        <taxon>Sphingomonadales</taxon>
        <taxon>Zymomonadaceae</taxon>
        <taxon>Zymomonas</taxon>
    </lineage>
</organism>
<accession>Q5NPM2</accession>
<proteinExistence type="inferred from homology"/>
<evidence type="ECO:0000255" key="1">
    <source>
        <dbReference type="HAMAP-Rule" id="MF_01899"/>
    </source>
</evidence>
<feature type="chain" id="PRO_0000411075" description="Ribonuclease D">
    <location>
        <begin position="1"/>
        <end position="390"/>
    </location>
</feature>
<feature type="domain" description="3'-5' exonuclease" evidence="1">
    <location>
        <begin position="7"/>
        <end position="173"/>
    </location>
</feature>
<feature type="domain" description="HRDC" evidence="1">
    <location>
        <begin position="212"/>
        <end position="293"/>
    </location>
</feature>
<gene>
    <name evidence="1" type="primary">rnd</name>
    <name type="ordered locus">ZMO0714</name>
</gene>
<sequence>MQIHPLITDSATLAALCSRLSRADFIAIDTEFIRENSYWPELCLIQIADDKEAAAIDPLAPGLDMTPLTDLLVNNEDILKVFHAGGQDLEIILHHTGKMPFPLFDTQIAAMALGVGEQVGYSNLVERYLSIKLDKGARFTDWSHRPLDRRQLDYAIADVTHLATLFPMLLKELRDKGRGAWLDQEMERLADPSQYINDPEKSWLRIRMPNRKADILGRLKALAAWREIEAQNRNIPRGRIAKDETLADLAIHPPRRQSDLVKVRGLSGSWGSNDIGQRLMEAIENAEALRPEEIPQRNDRKLCIGKDGAMIADLLKLLLKMRARDAEVAARLIAKSDDIEGIIAGERENNPVLTGWRYDIFGKEAIALIEGKMAFSVQKGKIAMTLIEKE</sequence>
<protein>
    <recommendedName>
        <fullName evidence="1">Ribonuclease D</fullName>
        <shortName evidence="1">RNase D</shortName>
        <ecNumber evidence="1">3.1.13.5</ecNumber>
    </recommendedName>
</protein>
<reference key="1">
    <citation type="journal article" date="2005" name="Nat. Biotechnol.">
        <title>The genome sequence of the ethanologenic bacterium Zymomonas mobilis ZM4.</title>
        <authorList>
            <person name="Seo J.-S."/>
            <person name="Chong H."/>
            <person name="Park H.S."/>
            <person name="Yoon K.-O."/>
            <person name="Jung C."/>
            <person name="Kim J.J."/>
            <person name="Hong J.H."/>
            <person name="Kim H."/>
            <person name="Kim J.-H."/>
            <person name="Kil J.-I."/>
            <person name="Park C.J."/>
            <person name="Oh H.-M."/>
            <person name="Lee J.-S."/>
            <person name="Jin S.-J."/>
            <person name="Um H.-W."/>
            <person name="Lee H.-J."/>
            <person name="Oh S.-J."/>
            <person name="Kim J.Y."/>
            <person name="Kang H.L."/>
            <person name="Lee S.Y."/>
            <person name="Lee K.J."/>
            <person name="Kang H.S."/>
        </authorList>
    </citation>
    <scope>NUCLEOTIDE SEQUENCE [LARGE SCALE GENOMIC DNA]</scope>
    <source>
        <strain>ATCC 31821 / ZM4 / CP4</strain>
    </source>
</reference>
<comment type="function">
    <text evidence="1">Exonuclease involved in the 3' processing of various precursor tRNAs. Initiates hydrolysis at the 3'-terminus of an RNA molecule and releases 5'-mononucleotides.</text>
</comment>
<comment type="catalytic activity">
    <reaction evidence="1">
        <text>Exonucleolytic cleavage that removes extra residues from the 3'-terminus of tRNA to produce 5'-mononucleotides.</text>
        <dbReference type="EC" id="3.1.13.5"/>
    </reaction>
</comment>
<comment type="cofactor">
    <cofactor evidence="1">
        <name>a divalent metal cation</name>
        <dbReference type="ChEBI" id="CHEBI:60240"/>
    </cofactor>
</comment>
<comment type="subcellular location">
    <subcellularLocation>
        <location evidence="1">Cytoplasm</location>
    </subcellularLocation>
</comment>
<comment type="similarity">
    <text evidence="1">Belongs to the RNase D family.</text>
</comment>
<name>RND_ZYMMO</name>